<sequence>MQTSPLLTQLMEALRCLPGVGPKSAQRMAFTLLQRDRSGGMRLAQALTRAMSEIGHCADCRTFTEQEVCNICSNPRRQENGQICVVESPADIYAIEQTGQFSGRYFVLMGHLSPLDGIGPDDIGLDRLEQRLAEEKITEVILATNPTVEGEATANYIAELCAQYDVEASRIAHGVPVGGELEMVDGTTLSHSLAGRHKIRF</sequence>
<accession>B7NIF8</accession>
<gene>
    <name evidence="1" type="primary">recR</name>
    <name type="ordered locus">ECIAI39_0199</name>
</gene>
<name>RECR_ECO7I</name>
<keyword id="KW-0227">DNA damage</keyword>
<keyword id="KW-0233">DNA recombination</keyword>
<keyword id="KW-0234">DNA repair</keyword>
<keyword id="KW-0479">Metal-binding</keyword>
<keyword id="KW-0862">Zinc</keyword>
<keyword id="KW-0863">Zinc-finger</keyword>
<protein>
    <recommendedName>
        <fullName evidence="1">Recombination protein RecR</fullName>
    </recommendedName>
</protein>
<dbReference type="EMBL" id="CU928164">
    <property type="protein sequence ID" value="CAR16339.1"/>
    <property type="molecule type" value="Genomic_DNA"/>
</dbReference>
<dbReference type="RefSeq" id="WP_001195025.1">
    <property type="nucleotide sequence ID" value="NC_011750.1"/>
</dbReference>
<dbReference type="RefSeq" id="YP_002406245.1">
    <property type="nucleotide sequence ID" value="NC_011750.1"/>
</dbReference>
<dbReference type="SMR" id="B7NIF8"/>
<dbReference type="STRING" id="585057.ECIAI39_0199"/>
<dbReference type="GeneID" id="93776978"/>
<dbReference type="KEGG" id="ect:ECIAI39_0199"/>
<dbReference type="PATRIC" id="fig|585057.6.peg.212"/>
<dbReference type="HOGENOM" id="CLU_060739_1_2_6"/>
<dbReference type="Proteomes" id="UP000000749">
    <property type="component" value="Chromosome"/>
</dbReference>
<dbReference type="GO" id="GO:0003677">
    <property type="term" value="F:DNA binding"/>
    <property type="evidence" value="ECO:0007669"/>
    <property type="project" value="UniProtKB-UniRule"/>
</dbReference>
<dbReference type="GO" id="GO:0008270">
    <property type="term" value="F:zinc ion binding"/>
    <property type="evidence" value="ECO:0007669"/>
    <property type="project" value="UniProtKB-KW"/>
</dbReference>
<dbReference type="GO" id="GO:0006310">
    <property type="term" value="P:DNA recombination"/>
    <property type="evidence" value="ECO:0007669"/>
    <property type="project" value="UniProtKB-UniRule"/>
</dbReference>
<dbReference type="GO" id="GO:0006281">
    <property type="term" value="P:DNA repair"/>
    <property type="evidence" value="ECO:0007669"/>
    <property type="project" value="UniProtKB-UniRule"/>
</dbReference>
<dbReference type="CDD" id="cd01025">
    <property type="entry name" value="TOPRIM_recR"/>
    <property type="match status" value="1"/>
</dbReference>
<dbReference type="FunFam" id="1.10.8.420:FF:000001">
    <property type="entry name" value="Recombination protein RecR"/>
    <property type="match status" value="1"/>
</dbReference>
<dbReference type="FunFam" id="3.40.1360.10:FF:000001">
    <property type="entry name" value="Recombination protein RecR"/>
    <property type="match status" value="1"/>
</dbReference>
<dbReference type="Gene3D" id="3.40.1360.10">
    <property type="match status" value="1"/>
</dbReference>
<dbReference type="Gene3D" id="6.10.250.240">
    <property type="match status" value="1"/>
</dbReference>
<dbReference type="Gene3D" id="1.10.8.420">
    <property type="entry name" value="RecR Domain 1"/>
    <property type="match status" value="1"/>
</dbReference>
<dbReference type="HAMAP" id="MF_00017">
    <property type="entry name" value="RecR"/>
    <property type="match status" value="1"/>
</dbReference>
<dbReference type="InterPro" id="IPR000093">
    <property type="entry name" value="DNA_Rcmb_RecR"/>
</dbReference>
<dbReference type="InterPro" id="IPR023627">
    <property type="entry name" value="Rcmb_RecR"/>
</dbReference>
<dbReference type="InterPro" id="IPR015967">
    <property type="entry name" value="Rcmb_RecR_Znf"/>
</dbReference>
<dbReference type="InterPro" id="IPR006171">
    <property type="entry name" value="TOPRIM_dom"/>
</dbReference>
<dbReference type="InterPro" id="IPR034137">
    <property type="entry name" value="TOPRIM_RecR"/>
</dbReference>
<dbReference type="NCBIfam" id="TIGR00615">
    <property type="entry name" value="recR"/>
    <property type="match status" value="1"/>
</dbReference>
<dbReference type="PANTHER" id="PTHR30446">
    <property type="entry name" value="RECOMBINATION PROTEIN RECR"/>
    <property type="match status" value="1"/>
</dbReference>
<dbReference type="PANTHER" id="PTHR30446:SF0">
    <property type="entry name" value="RECOMBINATION PROTEIN RECR"/>
    <property type="match status" value="1"/>
</dbReference>
<dbReference type="Pfam" id="PF21175">
    <property type="entry name" value="RecR_C"/>
    <property type="match status" value="1"/>
</dbReference>
<dbReference type="Pfam" id="PF21176">
    <property type="entry name" value="RecR_HhH"/>
    <property type="match status" value="1"/>
</dbReference>
<dbReference type="Pfam" id="PF02132">
    <property type="entry name" value="RecR_ZnF"/>
    <property type="match status" value="1"/>
</dbReference>
<dbReference type="Pfam" id="PF13662">
    <property type="entry name" value="Toprim_4"/>
    <property type="match status" value="1"/>
</dbReference>
<dbReference type="SMART" id="SM00493">
    <property type="entry name" value="TOPRIM"/>
    <property type="match status" value="1"/>
</dbReference>
<dbReference type="SUPFAM" id="SSF111304">
    <property type="entry name" value="Recombination protein RecR"/>
    <property type="match status" value="1"/>
</dbReference>
<dbReference type="PROSITE" id="PS01300">
    <property type="entry name" value="RECR"/>
    <property type="match status" value="1"/>
</dbReference>
<dbReference type="PROSITE" id="PS50880">
    <property type="entry name" value="TOPRIM"/>
    <property type="match status" value="1"/>
</dbReference>
<organism>
    <name type="scientific">Escherichia coli O7:K1 (strain IAI39 / ExPEC)</name>
    <dbReference type="NCBI Taxonomy" id="585057"/>
    <lineage>
        <taxon>Bacteria</taxon>
        <taxon>Pseudomonadati</taxon>
        <taxon>Pseudomonadota</taxon>
        <taxon>Gammaproteobacteria</taxon>
        <taxon>Enterobacterales</taxon>
        <taxon>Enterobacteriaceae</taxon>
        <taxon>Escherichia</taxon>
    </lineage>
</organism>
<reference key="1">
    <citation type="journal article" date="2009" name="PLoS Genet.">
        <title>Organised genome dynamics in the Escherichia coli species results in highly diverse adaptive paths.</title>
        <authorList>
            <person name="Touchon M."/>
            <person name="Hoede C."/>
            <person name="Tenaillon O."/>
            <person name="Barbe V."/>
            <person name="Baeriswyl S."/>
            <person name="Bidet P."/>
            <person name="Bingen E."/>
            <person name="Bonacorsi S."/>
            <person name="Bouchier C."/>
            <person name="Bouvet O."/>
            <person name="Calteau A."/>
            <person name="Chiapello H."/>
            <person name="Clermont O."/>
            <person name="Cruveiller S."/>
            <person name="Danchin A."/>
            <person name="Diard M."/>
            <person name="Dossat C."/>
            <person name="Karoui M.E."/>
            <person name="Frapy E."/>
            <person name="Garry L."/>
            <person name="Ghigo J.M."/>
            <person name="Gilles A.M."/>
            <person name="Johnson J."/>
            <person name="Le Bouguenec C."/>
            <person name="Lescat M."/>
            <person name="Mangenot S."/>
            <person name="Martinez-Jehanne V."/>
            <person name="Matic I."/>
            <person name="Nassif X."/>
            <person name="Oztas S."/>
            <person name="Petit M.A."/>
            <person name="Pichon C."/>
            <person name="Rouy Z."/>
            <person name="Ruf C.S."/>
            <person name="Schneider D."/>
            <person name="Tourret J."/>
            <person name="Vacherie B."/>
            <person name="Vallenet D."/>
            <person name="Medigue C."/>
            <person name="Rocha E.P.C."/>
            <person name="Denamur E."/>
        </authorList>
    </citation>
    <scope>NUCLEOTIDE SEQUENCE [LARGE SCALE GENOMIC DNA]</scope>
    <source>
        <strain>IAI39 / ExPEC</strain>
    </source>
</reference>
<evidence type="ECO:0000255" key="1">
    <source>
        <dbReference type="HAMAP-Rule" id="MF_00017"/>
    </source>
</evidence>
<comment type="function">
    <text evidence="1">May play a role in DNA repair. It seems to be involved in an RecBC-independent recombinational process of DNA repair. It may act with RecF and RecO.</text>
</comment>
<comment type="similarity">
    <text evidence="1">Belongs to the RecR family.</text>
</comment>
<feature type="chain" id="PRO_1000195387" description="Recombination protein RecR">
    <location>
        <begin position="1"/>
        <end position="201"/>
    </location>
</feature>
<feature type="domain" description="Toprim" evidence="1">
    <location>
        <begin position="81"/>
        <end position="176"/>
    </location>
</feature>
<feature type="zinc finger region" description="C4-type" evidence="1">
    <location>
        <begin position="57"/>
        <end position="72"/>
    </location>
</feature>
<proteinExistence type="inferred from homology"/>